<organism>
    <name type="scientific">Oscheius tipulae</name>
    <dbReference type="NCBI Taxonomy" id="141969"/>
    <lineage>
        <taxon>Eukaryota</taxon>
        <taxon>Metazoa</taxon>
        <taxon>Ecdysozoa</taxon>
        <taxon>Nematoda</taxon>
        <taxon>Chromadorea</taxon>
        <taxon>Rhabditida</taxon>
        <taxon>Rhabditina</taxon>
        <taxon>Rhabditomorpha</taxon>
        <taxon>Rhabditoidea</taxon>
        <taxon>Rhabditidae</taxon>
        <taxon>Rhabditinae</taxon>
        <taxon>Oscheius</taxon>
    </lineage>
</organism>
<reference key="1">
    <citation type="journal article" date="1996" name="Mol. Biol. Evol.">
        <title>Comparison of a vitellogenin gene between two distantly related rhabditid nematode species.</title>
        <authorList>
            <person name="Winter C.E."/>
            <person name="Penha C."/>
            <person name="Blumenthal T."/>
        </authorList>
    </citation>
    <scope>NUCLEOTIDE SEQUENCE [GENOMIC DNA]</scope>
    <source>
        <strain>CEW1</strain>
    </source>
</reference>
<reference key="2">
    <citation type="submission" date="2012-08" db="EMBL/GenBank/DDBJ databases">
        <authorList>
            <person name="Winter C.E."/>
        </authorList>
    </citation>
    <scope>SEQUENCE REVISION TO 244 AND 320-357</scope>
</reference>
<reference key="3">
    <citation type="journal article" date="2013" name="PLoS ONE">
        <title>The molecular and structural characterization of two vitellogenins from the free-living nematode Oscheius tipulae.</title>
        <authorList>
            <person name="Almenara D.P."/>
            <person name="de Moura J.P."/>
            <person name="Scarabotto C.P."/>
            <person name="Zingali R.B."/>
            <person name="Winter C.E."/>
        </authorList>
    </citation>
    <scope>PROTEIN SEQUENCE OF 16-18</scope>
    <scope>SUBCELLULAR LOCATION</scope>
    <scope>DEVELOPMENTAL STAGE</scope>
    <scope>PROTEOLYTIC PROCESSING</scope>
    <scope>GLYCOSYLATION</scope>
</reference>
<evidence type="ECO:0000250" key="1"/>
<evidence type="ECO:0000255" key="2"/>
<evidence type="ECO:0000255" key="3">
    <source>
        <dbReference type="PROSITE-ProRule" id="PRU00557"/>
    </source>
</evidence>
<evidence type="ECO:0000255" key="4">
    <source>
        <dbReference type="PROSITE-ProRule" id="PRU00580"/>
    </source>
</evidence>
<evidence type="ECO:0000256" key="5">
    <source>
        <dbReference type="SAM" id="MobiDB-lite"/>
    </source>
</evidence>
<evidence type="ECO:0000269" key="6">
    <source>
    </source>
</evidence>
<evidence type="ECO:0000305" key="7"/>
<feature type="signal peptide" evidence="6">
    <location>
        <begin position="1"/>
        <end position="15"/>
    </location>
</feature>
<feature type="chain" id="PRO_0000041538" description="Vitellogenin-6">
    <location>
        <begin position="16"/>
        <end position="1648"/>
    </location>
</feature>
<feature type="chain" id="PRO_5001030786" description="VT3" evidence="7">
    <location>
        <begin position="16"/>
        <end position="740"/>
    </location>
</feature>
<feature type="chain" id="PRO_5001030787" description="VT2" evidence="7">
    <location>
        <begin position="743"/>
        <end position="1648"/>
    </location>
</feature>
<feature type="domain" description="Vitellogenin" evidence="3">
    <location>
        <begin position="26"/>
        <end position="691"/>
    </location>
</feature>
<feature type="domain" description="VWFD" evidence="4">
    <location>
        <begin position="1346"/>
        <end position="1514"/>
    </location>
</feature>
<feature type="region of interest" description="Disordered" evidence="5">
    <location>
        <begin position="1070"/>
        <end position="1092"/>
    </location>
</feature>
<feature type="site" description="Cleavage" evidence="7">
    <location>
        <begin position="741"/>
        <end position="742"/>
    </location>
</feature>
<feature type="glycosylation site" description="N-linked (GlcNAc...) asparagine" evidence="2">
    <location>
        <position position="237"/>
    </location>
</feature>
<feature type="glycosylation site" description="N-linked (GlcNAc...) asparagine" evidence="2">
    <location>
        <position position="371"/>
    </location>
</feature>
<feature type="glycosylation site" description="N-linked (GlcNAc...) asparagine" evidence="2">
    <location>
        <position position="683"/>
    </location>
</feature>
<feature type="glycosylation site" description="N-linked (GlcNAc...) asparagine" evidence="2">
    <location>
        <position position="1295"/>
    </location>
</feature>
<feature type="glycosylation site" description="N-linked (GlcNAc...) asparagine" evidence="2">
    <location>
        <position position="1584"/>
    </location>
</feature>
<feature type="glycosylation site" description="N-linked (GlcNAc...) asparagine" evidence="2">
    <location>
        <position position="1617"/>
    </location>
</feature>
<feature type="disulfide bond" evidence="1">
    <location>
        <begin position="178"/>
        <end position="203"/>
    </location>
</feature>
<feature type="disulfide bond" evidence="1">
    <location>
        <begin position="219"/>
        <end position="222"/>
    </location>
</feature>
<feature type="disulfide bond" evidence="4">
    <location>
        <begin position="1348"/>
        <end position="1477"/>
    </location>
</feature>
<feature type="disulfide bond" evidence="4">
    <location>
        <begin position="1370"/>
        <end position="1513"/>
    </location>
</feature>
<dbReference type="EMBL" id="U35449">
    <property type="protein sequence ID" value="AAB49749.2"/>
    <property type="molecule type" value="Genomic_DNA"/>
</dbReference>
<dbReference type="SMR" id="Q94637"/>
<dbReference type="GlyCosmos" id="Q94637">
    <property type="glycosylation" value="6 sites, No reported glycans"/>
</dbReference>
<dbReference type="GO" id="GO:0005576">
    <property type="term" value="C:extracellular region"/>
    <property type="evidence" value="ECO:0007669"/>
    <property type="project" value="UniProtKB-SubCell"/>
</dbReference>
<dbReference type="GO" id="GO:0005319">
    <property type="term" value="F:lipid transporter activity"/>
    <property type="evidence" value="ECO:0007669"/>
    <property type="project" value="InterPro"/>
</dbReference>
<dbReference type="GO" id="GO:0045735">
    <property type="term" value="F:nutrient reservoir activity"/>
    <property type="evidence" value="ECO:0007669"/>
    <property type="project" value="UniProtKB-KW"/>
</dbReference>
<dbReference type="FunFam" id="1.25.10.20:FF:000003">
    <property type="entry name" value="Vitellogenin C"/>
    <property type="match status" value="1"/>
</dbReference>
<dbReference type="Gene3D" id="2.30.230.10">
    <property type="entry name" value="Lipovitellin, beta-sheet shell regions, chain A"/>
    <property type="match status" value="1"/>
</dbReference>
<dbReference type="Gene3D" id="2.20.80.10">
    <property type="entry name" value="Lipovitellin-phosvitin complex, chain A, domain 4"/>
    <property type="match status" value="1"/>
</dbReference>
<dbReference type="Gene3D" id="1.25.10.20">
    <property type="entry name" value="Vitellinogen, superhelical"/>
    <property type="match status" value="1"/>
</dbReference>
<dbReference type="InterPro" id="IPR015819">
    <property type="entry name" value="Lipid_transp_b-sht_shell"/>
</dbReference>
<dbReference type="InterPro" id="IPR011030">
    <property type="entry name" value="Lipovitellin_superhlx_dom"/>
</dbReference>
<dbReference type="InterPro" id="IPR015816">
    <property type="entry name" value="Vitellinogen_b-sht_N"/>
</dbReference>
<dbReference type="InterPro" id="IPR015255">
    <property type="entry name" value="Vitellinogen_open_b-sht"/>
</dbReference>
<dbReference type="InterPro" id="IPR050733">
    <property type="entry name" value="Vitellogenin/Apolipophorin"/>
</dbReference>
<dbReference type="InterPro" id="IPR001747">
    <property type="entry name" value="Vitellogenin_N"/>
</dbReference>
<dbReference type="InterPro" id="IPR001846">
    <property type="entry name" value="VWF_type-D"/>
</dbReference>
<dbReference type="PANTHER" id="PTHR23345:SF15">
    <property type="entry name" value="VITELLOGENIN 1-RELATED"/>
    <property type="match status" value="1"/>
</dbReference>
<dbReference type="PANTHER" id="PTHR23345">
    <property type="entry name" value="VITELLOGENIN-RELATED"/>
    <property type="match status" value="1"/>
</dbReference>
<dbReference type="Pfam" id="PF09172">
    <property type="entry name" value="Vit_open_b-sht"/>
    <property type="match status" value="1"/>
</dbReference>
<dbReference type="Pfam" id="PF01347">
    <property type="entry name" value="Vitellogenin_N"/>
    <property type="match status" value="1"/>
</dbReference>
<dbReference type="Pfam" id="PF00094">
    <property type="entry name" value="VWD"/>
    <property type="match status" value="1"/>
</dbReference>
<dbReference type="SMART" id="SM01169">
    <property type="entry name" value="DUF1943"/>
    <property type="match status" value="1"/>
</dbReference>
<dbReference type="SMART" id="SM00638">
    <property type="entry name" value="LPD_N"/>
    <property type="match status" value="1"/>
</dbReference>
<dbReference type="SMART" id="SM00216">
    <property type="entry name" value="VWD"/>
    <property type="match status" value="1"/>
</dbReference>
<dbReference type="SUPFAM" id="SSF56968">
    <property type="entry name" value="Lipovitellin-phosvitin complex, beta-sheet shell regions"/>
    <property type="match status" value="2"/>
</dbReference>
<dbReference type="SUPFAM" id="SSF48431">
    <property type="entry name" value="Lipovitellin-phosvitin complex, superhelical domain"/>
    <property type="match status" value="1"/>
</dbReference>
<dbReference type="PROSITE" id="PS51211">
    <property type="entry name" value="VITELLOGENIN"/>
    <property type="match status" value="1"/>
</dbReference>
<dbReference type="PROSITE" id="PS51233">
    <property type="entry name" value="VWFD"/>
    <property type="match status" value="1"/>
</dbReference>
<keyword id="KW-0165">Cleavage on pair of basic residues</keyword>
<keyword id="KW-0903">Direct protein sequencing</keyword>
<keyword id="KW-1015">Disulfide bond</keyword>
<keyword id="KW-0325">Glycoprotein</keyword>
<keyword id="KW-0677">Repeat</keyword>
<keyword id="KW-0964">Secreted</keyword>
<keyword id="KW-0732">Signal</keyword>
<keyword id="KW-0758">Storage protein</keyword>
<proteinExistence type="evidence at protein level"/>
<gene>
    <name type="primary">vit-6</name>
</gene>
<name>VIT6_OSCTI</name>
<comment type="function">
    <text evidence="7">Precursor of the egg-yolk proteins that are sources of nutrients during embryonic development.</text>
</comment>
<comment type="subcellular location">
    <subcellularLocation>
        <location evidence="6">Secreted</location>
    </subcellularLocation>
</comment>
<comment type="developmental stage">
    <text evidence="6">VT2 is detected in mature oocytes and in embryos with a small number of cells (at protein level).</text>
</comment>
<comment type="PTM">
    <text evidence="6">The precursor protein is probably further processed into vitellin polypeptides VT2 and VT3.</text>
</comment>
<comment type="PTM">
    <text evidence="6">Both VT2 and VT3 polypeptides seem to be N-glycosylated.</text>
</comment>
<accession>Q94637</accession>
<sequence>MRFAVLLALFGLALAARQSSVSEQYYRSGREYRYQFNGHLSAGLPIPGEENSATRIQSLIRIQPENGDFMRLQMTKTRFATSEEDRVLSFENMNEVPVSEKVEKVLSLPIRFSYRHGMVGEIEFSTEEQTWSSNIKKAVVNMLQVNLVKKGMSEKNEYETEHDNDFFLSNERTLEGECEVAYTKIEKSEKEQQWTKSINFEKCSLRPEIVYGRRYAEECNECRERDEKFSSTVFFYNITGTPEEFLINSVELQSKHMFAPVTEQKQLITARITNRLELVYSGEQKEQIEAVRNSDKKENLLYNPEHEIAEEKFAQTGDEKYLRRIPNYVDQGEIIRQQLNRLSKQTEQIELESNHVHARLVKSLRFATEDNLSSIRSLVSQKSEVVQSLYWDALAIAGTKVTVSHLLEKINNKEISPMKASQLMKILAEVRIPSEQIAQELHRFCESDIVSRSAVLRQSCWLSYGSVLNGVCGQTKNVYGSEITETRKQCTRQMKEKYIRELIEKMNQAESRYEKVLFVKAIANAGIDTSVVELEKIIRNQEVEKTVRMQAIDALRRLRLSMPKKIQNVLMPVYRNHKETPGIRISALHMIMQTQPTSGVLDMIVRGLEKERSQQVRVYTWSTLKTLSESENPAEKEIRRRVSQSLASIPVEEQKYLESKHKTFNWFNMQSGATLNWATIFSNDSVLPKEITASLETVFGGEWNKYLAQIGLYQNNLDSVLSKLLQKVEETGLEQLVVRGKRSSSFFRPAEMLRSLVESLRISHRQVPAMSPIAMIYLRYKDQDYAFLPIDIDTLPEMIRRVARDGQLDLSEIEKVLTQAARFTVAGSAFFHETVRKVPSALGMPQVMTSKMPTVAQMNGEVKFDLEPLNSDKFTGLRLRVKAEPHVASTHVCKLELFTPIGGQGIKLLHGGRIQAPIDSEIEINWEKKLIVKATIKSPEQKRHIAHFMTRPVLFSREVTMDKQMRQYPEPREKTIQLRENRFPIHAFERQYFEQTGLKMTVSGHYRRPFTTAFTLGESIMMSSSSLPRMLSLKEVVAYMSFSGFEETEMDEPRLLNRFYEKETELFETEKNVEYEQEDKEPKSSQLQSQIRKVKSEGKAYKHRVHMKIHTVGGPKTQEAECEIRALCDERVRFCRLNLDASRSPIQGESRQWQLKSSAEWLYPEVPSTMKKMLESRREWNAMWTGKWGSEKQNEVTIRVQGEQSSEQKFWMKKAEREQSPLTSGGQASRAAQLNQYNIHATYEVTPETEFWMENVYSMFKTYYFFSAEVQPKQNKENRIQCQITLEPFTRQLFNVTVMSPKEKLVLELENQQTPFRLPAVNIGREFGRVQSVRHVVKAVERQTRPECIVKSKEIQTFDEVFYRTPVMECFSVLAKDCSENPDFAVLMRKVSKRGEEKMWKVISRENVIELEKKSEEMSVRVNGKEISEDKWEDFGISQRGEEKFFIDAEKVTVEFDGFQAKIQMSSLYKNKQCGLCGHYDGEKTNEFRRADNEETDDIEEFSRSYLSKDDECEVDEQEMTNKRNYKVLREETSSSEEISESLIELYSEAFQSREAHHRLGRREDRQVCFSQQAWNKCLKSKDNKTETKNVHFKCLTETTRSPRISSVFSQADISENLSDVEGLPSLAEPSPHSRFLPCVIPSLSLSQ</sequence>
<protein>
    <recommendedName>
        <fullName>Vitellogenin-6</fullName>
        <shortName>OTI-VIT-6</shortName>
    </recommendedName>
    <component>
        <recommendedName>
            <fullName>VT3</fullName>
        </recommendedName>
    </component>
    <component>
        <recommendedName>
            <fullName>VT2</fullName>
        </recommendedName>
    </component>
</protein>